<accession>A6SBW7</accession>
<accession>A0A384JZY2</accession>
<comment type="function">
    <text evidence="1">Secreted metalloproteinase that allows assimilation of proteinaceous substrates. Shows high activities on basic nuclear substrates such as histone and protamine (By similarity).</text>
</comment>
<comment type="catalytic activity">
    <reaction>
        <text>Preferential cleavage of bonds with hydrophobic residues in P1'. Also 3-Asn-|-Gln-4 and 8-Gly-|-Ser-9 bonds in insulin B chain.</text>
        <dbReference type="EC" id="3.4.24.39"/>
    </reaction>
</comment>
<comment type="cofactor">
    <cofactor evidence="1">
        <name>Zn(2+)</name>
        <dbReference type="ChEBI" id="CHEBI:29105"/>
    </cofactor>
    <text evidence="1">Binds 1 zinc ion per subunit.</text>
</comment>
<comment type="subcellular location">
    <subcellularLocation>
        <location evidence="1">Secreted</location>
    </subcellularLocation>
</comment>
<comment type="similarity">
    <text evidence="4">Belongs to the peptidase M35 family.</text>
</comment>
<gene>
    <name type="ORF">BC1G_10098</name>
    <name type="ORF">BCIN_12g06300</name>
</gene>
<dbReference type="EC" id="3.4.24.39"/>
<dbReference type="EMBL" id="CP009816">
    <property type="protein sequence ID" value="ATZ56098.1"/>
    <property type="molecule type" value="Genomic_DNA"/>
</dbReference>
<dbReference type="SMR" id="A6SBW7"/>
<dbReference type="MEROPS" id="M35.001"/>
<dbReference type="EnsemblFungi" id="Bcin12g06300.1">
    <property type="protein sequence ID" value="Bcin12p06300.1"/>
    <property type="gene ID" value="Bcin12g06300"/>
</dbReference>
<dbReference type="VEuPathDB" id="FungiDB:Bcin12g06300"/>
<dbReference type="OrthoDB" id="412874at2759"/>
<dbReference type="Proteomes" id="UP000001798">
    <property type="component" value="Chromosome bcin12"/>
</dbReference>
<dbReference type="GO" id="GO:0005576">
    <property type="term" value="C:extracellular region"/>
    <property type="evidence" value="ECO:0007669"/>
    <property type="project" value="UniProtKB-SubCell"/>
</dbReference>
<dbReference type="GO" id="GO:0046872">
    <property type="term" value="F:metal ion binding"/>
    <property type="evidence" value="ECO:0007669"/>
    <property type="project" value="UniProtKB-KW"/>
</dbReference>
<dbReference type="GO" id="GO:0004222">
    <property type="term" value="F:metalloendopeptidase activity"/>
    <property type="evidence" value="ECO:0007669"/>
    <property type="project" value="InterPro"/>
</dbReference>
<dbReference type="GO" id="GO:0006508">
    <property type="term" value="P:proteolysis"/>
    <property type="evidence" value="ECO:0007669"/>
    <property type="project" value="UniProtKB-KW"/>
</dbReference>
<dbReference type="CDD" id="cd11008">
    <property type="entry name" value="M35_deuterolysin_like"/>
    <property type="match status" value="1"/>
</dbReference>
<dbReference type="Gene3D" id="2.60.40.2970">
    <property type="match status" value="1"/>
</dbReference>
<dbReference type="Gene3D" id="3.40.390.10">
    <property type="entry name" value="Collagenase (Catalytic Domain)"/>
    <property type="match status" value="1"/>
</dbReference>
<dbReference type="InterPro" id="IPR050414">
    <property type="entry name" value="Fungal_M35_metalloproteases"/>
</dbReference>
<dbReference type="InterPro" id="IPR024079">
    <property type="entry name" value="MetalloPept_cat_dom_sf"/>
</dbReference>
<dbReference type="InterPro" id="IPR001384">
    <property type="entry name" value="Peptidase_M35"/>
</dbReference>
<dbReference type="PANTHER" id="PTHR37016">
    <property type="match status" value="1"/>
</dbReference>
<dbReference type="PANTHER" id="PTHR37016:SF3">
    <property type="entry name" value="NEUTRAL PROTEASE 2-RELATED"/>
    <property type="match status" value="1"/>
</dbReference>
<dbReference type="Pfam" id="PF02102">
    <property type="entry name" value="Peptidase_M35"/>
    <property type="match status" value="1"/>
</dbReference>
<dbReference type="PRINTS" id="PR00768">
    <property type="entry name" value="DEUTEROLYSIN"/>
</dbReference>
<dbReference type="SUPFAM" id="SSF55486">
    <property type="entry name" value="Metalloproteases ('zincins'), catalytic domain"/>
    <property type="match status" value="1"/>
</dbReference>
<dbReference type="PROSITE" id="PS00142">
    <property type="entry name" value="ZINC_PROTEASE"/>
    <property type="match status" value="1"/>
</dbReference>
<evidence type="ECO:0000250" key="1"/>
<evidence type="ECO:0000255" key="2"/>
<evidence type="ECO:0000255" key="3">
    <source>
        <dbReference type="PROSITE-ProRule" id="PRU10095"/>
    </source>
</evidence>
<evidence type="ECO:0000305" key="4"/>
<name>NPIIA_BOTFB</name>
<organism>
    <name type="scientific">Botryotinia fuckeliana (strain B05.10)</name>
    <name type="common">Noble rot fungus</name>
    <name type="synonym">Botrytis cinerea</name>
    <dbReference type="NCBI Taxonomy" id="332648"/>
    <lineage>
        <taxon>Eukaryota</taxon>
        <taxon>Fungi</taxon>
        <taxon>Dikarya</taxon>
        <taxon>Ascomycota</taxon>
        <taxon>Pezizomycotina</taxon>
        <taxon>Leotiomycetes</taxon>
        <taxon>Helotiales</taxon>
        <taxon>Sclerotiniaceae</taxon>
        <taxon>Botrytis</taxon>
    </lineage>
</organism>
<sequence>MRSFSKILAVASLAAIANSAVLKRDNNVLEVTLVAGENAVVHASVKNVGAEDLNLLSYGSLFDTAPVQKINVYEGETAVPFKGVLRAIQRTDLAPEVFHTLAAGETFETSFNAAEVHDLSTSTYTFVAEGAIPFAKAGSTEISDSIIFKSNAITVSVDGEAAKSVAKAIPSSIDRRTVLQSGCSTSQRSATTQALSYCASLARAASTAASSGSSTKFSEYFKTTSSSTRSVVAARLSAVASQCSSLTSGSTKYYCTDVYGYCESNVLAYTIPSTNEIVNCPIYYSALPALTGTCHAQDRATTTLHEFTHAPATYSPGTADNGYGYAAATALTSARAVLNADSYALYANAIYVGC</sequence>
<protein>
    <recommendedName>
        <fullName>Neutral protease 2 homolog BCIN_12g06300</fullName>
        <ecNumber>3.4.24.39</ecNumber>
    </recommendedName>
    <alternativeName>
        <fullName>Deuterolysin SNOG_10522</fullName>
    </alternativeName>
</protein>
<reference key="1">
    <citation type="journal article" date="2011" name="PLoS Genet.">
        <title>Genomic analysis of the necrotrophic fungal pathogens Sclerotinia sclerotiorum and Botrytis cinerea.</title>
        <authorList>
            <person name="Amselem J."/>
            <person name="Cuomo C.A."/>
            <person name="van Kan J.A.L."/>
            <person name="Viaud M."/>
            <person name="Benito E.P."/>
            <person name="Couloux A."/>
            <person name="Coutinho P.M."/>
            <person name="de Vries R.P."/>
            <person name="Dyer P.S."/>
            <person name="Fillinger S."/>
            <person name="Fournier E."/>
            <person name="Gout L."/>
            <person name="Hahn M."/>
            <person name="Kohn L."/>
            <person name="Lapalu N."/>
            <person name="Plummer K.M."/>
            <person name="Pradier J.-M."/>
            <person name="Quevillon E."/>
            <person name="Sharon A."/>
            <person name="Simon A."/>
            <person name="ten Have A."/>
            <person name="Tudzynski B."/>
            <person name="Tudzynski P."/>
            <person name="Wincker P."/>
            <person name="Andrew M."/>
            <person name="Anthouard V."/>
            <person name="Beever R.E."/>
            <person name="Beffa R."/>
            <person name="Benoit I."/>
            <person name="Bouzid O."/>
            <person name="Brault B."/>
            <person name="Chen Z."/>
            <person name="Choquer M."/>
            <person name="Collemare J."/>
            <person name="Cotton P."/>
            <person name="Danchin E.G."/>
            <person name="Da Silva C."/>
            <person name="Gautier A."/>
            <person name="Giraud C."/>
            <person name="Giraud T."/>
            <person name="Gonzalez C."/>
            <person name="Grossetete S."/>
            <person name="Gueldener U."/>
            <person name="Henrissat B."/>
            <person name="Howlett B.J."/>
            <person name="Kodira C."/>
            <person name="Kretschmer M."/>
            <person name="Lappartient A."/>
            <person name="Leroch M."/>
            <person name="Levis C."/>
            <person name="Mauceli E."/>
            <person name="Neuveglise C."/>
            <person name="Oeser B."/>
            <person name="Pearson M."/>
            <person name="Poulain J."/>
            <person name="Poussereau N."/>
            <person name="Quesneville H."/>
            <person name="Rascle C."/>
            <person name="Schumacher J."/>
            <person name="Segurens B."/>
            <person name="Sexton A."/>
            <person name="Silva E."/>
            <person name="Sirven C."/>
            <person name="Soanes D.M."/>
            <person name="Talbot N.J."/>
            <person name="Templeton M."/>
            <person name="Yandava C."/>
            <person name="Yarden O."/>
            <person name="Zeng Q."/>
            <person name="Rollins J.A."/>
            <person name="Lebrun M.-H."/>
            <person name="Dickman M."/>
        </authorList>
    </citation>
    <scope>NUCLEOTIDE SEQUENCE [LARGE SCALE GENOMIC DNA]</scope>
    <source>
        <strain>B05.10</strain>
    </source>
</reference>
<reference key="2">
    <citation type="journal article" date="2012" name="Eukaryot. Cell">
        <title>Genome update of Botrytis cinerea strains B05.10 and T4.</title>
        <authorList>
            <person name="Staats M."/>
            <person name="van Kan J.A.L."/>
        </authorList>
    </citation>
    <scope>NUCLEOTIDE SEQUENCE [LARGE SCALE GENOMIC DNA]</scope>
    <scope>GENOME REANNOTATION</scope>
    <source>
        <strain>B05.10</strain>
    </source>
</reference>
<reference key="3">
    <citation type="journal article" date="2017" name="Mol. Plant Pathol.">
        <title>A gapless genome sequence of the fungus Botrytis cinerea.</title>
        <authorList>
            <person name="van Kan J.A.L."/>
            <person name="Stassen J.H.M."/>
            <person name="Mosbach A."/>
            <person name="van der Lee T.A.J."/>
            <person name="Faino L."/>
            <person name="Farmer A.D."/>
            <person name="Papasotiriou D.G."/>
            <person name="Zhou S."/>
            <person name="Seidl M.F."/>
            <person name="Cottam E."/>
            <person name="Edel D."/>
            <person name="Hahn M."/>
            <person name="Schwartz D.C."/>
            <person name="Dietrich R.A."/>
            <person name="Widdison S."/>
            <person name="Scalliet G."/>
        </authorList>
    </citation>
    <scope>NUCLEOTIDE SEQUENCE [LARGE SCALE GENOMIC DNA]</scope>
    <scope>GENOME REANNOTATION</scope>
    <source>
        <strain>B05.10</strain>
    </source>
</reference>
<feature type="signal peptide" evidence="2">
    <location>
        <begin position="1"/>
        <end position="19"/>
    </location>
</feature>
<feature type="propeptide" id="PRO_0000407098" evidence="1">
    <location>
        <begin position="20"/>
        <end position="179"/>
    </location>
</feature>
<feature type="chain" id="PRO_0000407099" description="Neutral protease 2 homolog BCIN_12g06300">
    <location>
        <begin position="180"/>
        <end position="354"/>
    </location>
</feature>
<feature type="active site" evidence="3">
    <location>
        <position position="306"/>
    </location>
</feature>
<feature type="binding site" evidence="3">
    <location>
        <position position="305"/>
    </location>
    <ligand>
        <name>Zn(2+)</name>
        <dbReference type="ChEBI" id="CHEBI:29105"/>
        <note>catalytic</note>
    </ligand>
</feature>
<feature type="binding site" evidence="3">
    <location>
        <position position="309"/>
    </location>
    <ligand>
        <name>Zn(2+)</name>
        <dbReference type="ChEBI" id="CHEBI:29105"/>
        <note>catalytic</note>
    </ligand>
</feature>
<feature type="binding site" evidence="3">
    <location>
        <position position="320"/>
    </location>
    <ligand>
        <name>Zn(2+)</name>
        <dbReference type="ChEBI" id="CHEBI:29105"/>
        <note>catalytic</note>
    </ligand>
</feature>
<feature type="disulfide bond" evidence="1">
    <location>
        <begin position="183"/>
        <end position="255"/>
    </location>
</feature>
<feature type="disulfide bond" evidence="1">
    <location>
        <begin position="262"/>
        <end position="280"/>
    </location>
</feature>
<proteinExistence type="inferred from homology"/>
<keyword id="KW-0165">Cleavage on pair of basic residues</keyword>
<keyword id="KW-1015">Disulfide bond</keyword>
<keyword id="KW-0378">Hydrolase</keyword>
<keyword id="KW-0479">Metal-binding</keyword>
<keyword id="KW-0482">Metalloprotease</keyword>
<keyword id="KW-0645">Protease</keyword>
<keyword id="KW-1185">Reference proteome</keyword>
<keyword id="KW-0964">Secreted</keyword>
<keyword id="KW-0732">Signal</keyword>
<keyword id="KW-0862">Zinc</keyword>
<keyword id="KW-0865">Zymogen</keyword>